<reference key="1">
    <citation type="journal article" date="2008" name="J. Bacteriol.">
        <title>The complete genome sequence of Thermococcus onnurineus NA1 reveals a mixed heterotrophic and carboxydotrophic metabolism.</title>
        <authorList>
            <person name="Lee H.S."/>
            <person name="Kang S.G."/>
            <person name="Bae S.S."/>
            <person name="Lim J.K."/>
            <person name="Cho Y."/>
            <person name="Kim Y.J."/>
            <person name="Jeon J.H."/>
            <person name="Cha S.-S."/>
            <person name="Kwon K.K."/>
            <person name="Kim H.-T."/>
            <person name="Park C.-J."/>
            <person name="Lee H.-W."/>
            <person name="Kim S.I."/>
            <person name="Chun J."/>
            <person name="Colwell R.R."/>
            <person name="Kim S.-J."/>
            <person name="Lee J.-H."/>
        </authorList>
    </citation>
    <scope>NUCLEOTIDE SEQUENCE [LARGE SCALE GENOMIC DNA]</scope>
    <source>
        <strain>NA1</strain>
    </source>
</reference>
<name>ATGT_THEON</name>
<protein>
    <recommendedName>
        <fullName evidence="1">tRNA-guanine(15) transglycosylase</fullName>
        <ecNumber evidence="1">2.4.2.48</ecNumber>
    </recommendedName>
    <alternativeName>
        <fullName evidence="1">7-cyano-7-deazaguanine tRNA-ribosyltransferase</fullName>
    </alternativeName>
    <alternativeName>
        <fullName evidence="1">Archaeal tRNA-guanine transglycosylase</fullName>
    </alternativeName>
</protein>
<comment type="function">
    <text evidence="1">Exchanges the guanine residue with 7-cyano-7-deazaguanine (preQ0) at position 15 in the dihydrouridine loop (D-loop) of archaeal tRNAs.</text>
</comment>
<comment type="catalytic activity">
    <reaction evidence="1">
        <text>guanosine(15) in tRNA + 7-cyano-7-deazaguanine = 7-cyano-7-carbaguanosine(15) in tRNA + guanine</text>
        <dbReference type="Rhea" id="RHEA:43164"/>
        <dbReference type="Rhea" id="RHEA-COMP:10371"/>
        <dbReference type="Rhea" id="RHEA-COMP:10372"/>
        <dbReference type="ChEBI" id="CHEBI:16235"/>
        <dbReference type="ChEBI" id="CHEBI:45075"/>
        <dbReference type="ChEBI" id="CHEBI:74269"/>
        <dbReference type="ChEBI" id="CHEBI:82850"/>
        <dbReference type="EC" id="2.4.2.48"/>
    </reaction>
</comment>
<comment type="cofactor">
    <cofactor evidence="1">
        <name>Zn(2+)</name>
        <dbReference type="ChEBI" id="CHEBI:29105"/>
    </cofactor>
    <text evidence="1">Binds 1 zinc ion per subunit.</text>
</comment>
<comment type="pathway">
    <text evidence="1">tRNA modification; archaeosine-tRNA biosynthesis.</text>
</comment>
<comment type="similarity">
    <text evidence="1">Belongs to the archaeosine tRNA-ribosyltransferase family.</text>
</comment>
<accession>B6YUR8</accession>
<gene>
    <name evidence="1" type="primary">tgtA</name>
    <name type="ordered locus">TON_0617</name>
</gene>
<dbReference type="EC" id="2.4.2.48" evidence="1"/>
<dbReference type="EMBL" id="CP000855">
    <property type="protein sequence ID" value="ACJ16104.1"/>
    <property type="molecule type" value="Genomic_DNA"/>
</dbReference>
<dbReference type="RefSeq" id="WP_012571576.1">
    <property type="nucleotide sequence ID" value="NC_011529.1"/>
</dbReference>
<dbReference type="SMR" id="B6YUR8"/>
<dbReference type="STRING" id="523850.TON_0617"/>
<dbReference type="GeneID" id="7016915"/>
<dbReference type="KEGG" id="ton:TON_0617"/>
<dbReference type="PATRIC" id="fig|523850.10.peg.618"/>
<dbReference type="eggNOG" id="arCOG00989">
    <property type="taxonomic scope" value="Archaea"/>
</dbReference>
<dbReference type="eggNOG" id="arCOG00991">
    <property type="taxonomic scope" value="Archaea"/>
</dbReference>
<dbReference type="HOGENOM" id="CLU_030083_0_0_2"/>
<dbReference type="OrthoDB" id="6871at2157"/>
<dbReference type="UniPathway" id="UPA00393"/>
<dbReference type="Proteomes" id="UP000002727">
    <property type="component" value="Chromosome"/>
</dbReference>
<dbReference type="GO" id="GO:0005737">
    <property type="term" value="C:cytoplasm"/>
    <property type="evidence" value="ECO:0007669"/>
    <property type="project" value="TreeGrafter"/>
</dbReference>
<dbReference type="GO" id="GO:0016763">
    <property type="term" value="F:pentosyltransferase activity"/>
    <property type="evidence" value="ECO:0007669"/>
    <property type="project" value="UniProtKB-UniRule"/>
</dbReference>
<dbReference type="GO" id="GO:0003723">
    <property type="term" value="F:RNA binding"/>
    <property type="evidence" value="ECO:0007669"/>
    <property type="project" value="InterPro"/>
</dbReference>
<dbReference type="GO" id="GO:0008270">
    <property type="term" value="F:zinc ion binding"/>
    <property type="evidence" value="ECO:0007669"/>
    <property type="project" value="UniProtKB-UniRule"/>
</dbReference>
<dbReference type="GO" id="GO:0002099">
    <property type="term" value="P:tRNA wobble guanine modification"/>
    <property type="evidence" value="ECO:0007669"/>
    <property type="project" value="TreeGrafter"/>
</dbReference>
<dbReference type="CDD" id="cd21149">
    <property type="entry name" value="PUA_archaeosine_TGT"/>
    <property type="match status" value="1"/>
</dbReference>
<dbReference type="Gene3D" id="3.90.1020.10">
    <property type="entry name" value="ArcTGT, C1 domain"/>
    <property type="match status" value="1"/>
</dbReference>
<dbReference type="Gene3D" id="3.10.450.90">
    <property type="entry name" value="ArcTGT, C2 domain"/>
    <property type="match status" value="1"/>
</dbReference>
<dbReference type="Gene3D" id="2.30.130.10">
    <property type="entry name" value="PUA domain"/>
    <property type="match status" value="1"/>
</dbReference>
<dbReference type="Gene3D" id="3.20.20.105">
    <property type="entry name" value="Queuine tRNA-ribosyltransferase-like"/>
    <property type="match status" value="1"/>
</dbReference>
<dbReference type="HAMAP" id="MF_01634">
    <property type="entry name" value="TgtA_arch"/>
    <property type="match status" value="1"/>
</dbReference>
<dbReference type="InterPro" id="IPR050076">
    <property type="entry name" value="ArchSynthase1/Queuine_TRR"/>
</dbReference>
<dbReference type="InterPro" id="IPR038370">
    <property type="entry name" value="ArcTGT_C1_sf"/>
</dbReference>
<dbReference type="InterPro" id="IPR002478">
    <property type="entry name" value="PUA"/>
</dbReference>
<dbReference type="InterPro" id="IPR015947">
    <property type="entry name" value="PUA-like_sf"/>
</dbReference>
<dbReference type="InterPro" id="IPR036974">
    <property type="entry name" value="PUA_sf"/>
</dbReference>
<dbReference type="InterPro" id="IPR036511">
    <property type="entry name" value="TGT-like_sf"/>
</dbReference>
<dbReference type="InterPro" id="IPR032729">
    <property type="entry name" value="TGT_C1"/>
</dbReference>
<dbReference type="InterPro" id="IPR029402">
    <property type="entry name" value="TGT_C2"/>
</dbReference>
<dbReference type="InterPro" id="IPR038250">
    <property type="entry name" value="TGT_C2_sf"/>
</dbReference>
<dbReference type="InterPro" id="IPR004804">
    <property type="entry name" value="TgtA"/>
</dbReference>
<dbReference type="InterPro" id="IPR002616">
    <property type="entry name" value="tRNA_ribo_trans-like"/>
</dbReference>
<dbReference type="InterPro" id="IPR004521">
    <property type="entry name" value="Uncharacterised_CHP00451"/>
</dbReference>
<dbReference type="NCBIfam" id="TIGR00432">
    <property type="entry name" value="arcsn_tRNA_tgt"/>
    <property type="match status" value="1"/>
</dbReference>
<dbReference type="NCBIfam" id="TIGR00449">
    <property type="entry name" value="tgt_general"/>
    <property type="match status" value="1"/>
</dbReference>
<dbReference type="NCBIfam" id="TIGR00451">
    <property type="entry name" value="unchar_dom_2"/>
    <property type="match status" value="1"/>
</dbReference>
<dbReference type="PANTHER" id="PTHR46499">
    <property type="entry name" value="QUEUINE TRNA-RIBOSYLTRANSFERASE"/>
    <property type="match status" value="1"/>
</dbReference>
<dbReference type="PANTHER" id="PTHR46499:SF1">
    <property type="entry name" value="QUEUINE TRNA-RIBOSYLTRANSFERASE"/>
    <property type="match status" value="1"/>
</dbReference>
<dbReference type="Pfam" id="PF01472">
    <property type="entry name" value="PUA"/>
    <property type="match status" value="1"/>
</dbReference>
<dbReference type="Pfam" id="PF01702">
    <property type="entry name" value="TGT"/>
    <property type="match status" value="1"/>
</dbReference>
<dbReference type="Pfam" id="PF14809">
    <property type="entry name" value="TGT_C1"/>
    <property type="match status" value="1"/>
</dbReference>
<dbReference type="Pfam" id="PF14810">
    <property type="entry name" value="TGT_C2"/>
    <property type="match status" value="1"/>
</dbReference>
<dbReference type="SMART" id="SM00359">
    <property type="entry name" value="PUA"/>
    <property type="match status" value="1"/>
</dbReference>
<dbReference type="SUPFAM" id="SSF88802">
    <property type="entry name" value="Pre-PUA domain"/>
    <property type="match status" value="1"/>
</dbReference>
<dbReference type="SUPFAM" id="SSF88697">
    <property type="entry name" value="PUA domain-like"/>
    <property type="match status" value="1"/>
</dbReference>
<dbReference type="SUPFAM" id="SSF51713">
    <property type="entry name" value="tRNA-guanine transglycosylase"/>
    <property type="match status" value="1"/>
</dbReference>
<dbReference type="PROSITE" id="PS50890">
    <property type="entry name" value="PUA"/>
    <property type="match status" value="1"/>
</dbReference>
<evidence type="ECO:0000255" key="1">
    <source>
        <dbReference type="HAMAP-Rule" id="MF_01634"/>
    </source>
</evidence>
<organism>
    <name type="scientific">Thermococcus onnurineus (strain NA1)</name>
    <dbReference type="NCBI Taxonomy" id="523850"/>
    <lineage>
        <taxon>Archaea</taxon>
        <taxon>Methanobacteriati</taxon>
        <taxon>Methanobacteriota</taxon>
        <taxon>Thermococci</taxon>
        <taxon>Thermococcales</taxon>
        <taxon>Thermococcaceae</taxon>
        <taxon>Thermococcus</taxon>
    </lineage>
</organism>
<keyword id="KW-0328">Glycosyltransferase</keyword>
<keyword id="KW-0479">Metal-binding</keyword>
<keyword id="KW-0808">Transferase</keyword>
<keyword id="KW-0819">tRNA processing</keyword>
<keyword id="KW-0862">Zinc</keyword>
<feature type="chain" id="PRO_1000186652" description="tRNA-guanine(15) transglycosylase">
    <location>
        <begin position="1"/>
        <end position="580"/>
    </location>
</feature>
<feature type="domain" description="PUA" evidence="1">
    <location>
        <begin position="504"/>
        <end position="579"/>
    </location>
</feature>
<feature type="active site" description="Nucleophile" evidence="1">
    <location>
        <position position="91"/>
    </location>
</feature>
<feature type="binding site" evidence="1">
    <location>
        <position position="126"/>
    </location>
    <ligand>
        <name>substrate</name>
    </ligand>
</feature>
<feature type="binding site" evidence="1">
    <location>
        <position position="192"/>
    </location>
    <ligand>
        <name>substrate</name>
    </ligand>
</feature>
<feature type="binding site" evidence="1">
    <location>
        <position position="275"/>
    </location>
    <ligand>
        <name>Zn(2+)</name>
        <dbReference type="ChEBI" id="CHEBI:29105"/>
    </ligand>
</feature>
<feature type="binding site" evidence="1">
    <location>
        <position position="277"/>
    </location>
    <ligand>
        <name>Zn(2+)</name>
        <dbReference type="ChEBI" id="CHEBI:29105"/>
    </ligand>
</feature>
<feature type="binding site" evidence="1">
    <location>
        <position position="280"/>
    </location>
    <ligand>
        <name>Zn(2+)</name>
        <dbReference type="ChEBI" id="CHEBI:29105"/>
    </ligand>
</feature>
<proteinExistence type="inferred from homology"/>
<sequence length="580" mass="66172">MVEFKFEVKARDAAGRIGKLEVNGKKIETPAIMPVINPKQLTVTPKELKEMGFGIIITNSYIIYKTPELREKALEVGIHRLLDYDGIIEVDSGSFQLMRYGGVDVTNREIVEFQERIGVDIGTFLDIPTPPDAPREKAEEDLRITLERAKEAEEIKGIAMNAAVQGSTYPDLRTYAARKLSEMNFEIHPIGAVVPLMESYRYRDLVDVVIASKQGLRSDRPVHLFGAGHPMIFALAVAMGIDLFDSASYALYAKDDRYLTPEGTKHLSELEYFPCSCPVCSRYTPRELREMPKEERTRLLALHNLWVIREELNRVKQAIKEGELWRLVDERARSHPKLYAAYKRLLEYQDYLEKNEPITKASAFFKVSEESLKWPIVQRAKARAERVKAKFPETINHPIFGEIPKYLSLSYPFAQSEGEEDFTIEKPGKREVRNYVMAVAEYQFGEGTREAFKDAFVELSRKTGMPRQIKAKGKHLATFRAEDGLLTLGIEGAKRLHEILPFPRMRVVVDEDAEPFARKGKNVFAKFVIDADENIRPYDEVLIVNRNDELLATGQTLLNGRELKLFQSGLAVKVRRGVEK</sequence>